<gene>
    <name type="primary">mex-6</name>
    <name type="ORF">AH6.5</name>
</gene>
<feature type="chain" id="PRO_0000089184" description="Zinc finger protein mex-6">
    <location>
        <begin position="1"/>
        <end position="467"/>
    </location>
</feature>
<feature type="zinc finger region" description="C3H1-type 1" evidence="2">
    <location>
        <begin position="273"/>
        <end position="302"/>
    </location>
</feature>
<feature type="zinc finger region" description="C3H1-type 2" evidence="2">
    <location>
        <begin position="317"/>
        <end position="347"/>
    </location>
</feature>
<feature type="region of interest" description="Disordered" evidence="3">
    <location>
        <begin position="1"/>
        <end position="35"/>
    </location>
</feature>
<feature type="region of interest" description="Disordered" evidence="3">
    <location>
        <begin position="163"/>
        <end position="209"/>
    </location>
</feature>
<feature type="region of interest" description="Disordered" evidence="3">
    <location>
        <begin position="425"/>
        <end position="451"/>
    </location>
</feature>
<feature type="compositionally biased region" description="Low complexity" evidence="3">
    <location>
        <begin position="1"/>
        <end position="22"/>
    </location>
</feature>
<feature type="compositionally biased region" description="Low complexity" evidence="3">
    <location>
        <begin position="179"/>
        <end position="195"/>
    </location>
</feature>
<feature type="compositionally biased region" description="Basic and acidic residues" evidence="3">
    <location>
        <begin position="196"/>
        <end position="207"/>
    </location>
</feature>
<feature type="modified residue" description="Phosphothreonine" evidence="6">
    <location>
        <position position="190"/>
    </location>
</feature>
<feature type="modified residue" description="Phosphoserine" evidence="1">
    <location>
        <position position="457"/>
    </location>
</feature>
<feature type="mutagenesis site" description="Abolishes phosphorylation. Severe reduction in binding to plk-1 and plk-2." evidence="5">
    <original>T</original>
    <variation>A</variation>
    <location>
        <position position="190"/>
    </location>
</feature>
<feature type="mutagenesis site" description="Phosphomimetic mutant which severely abolishes interaction with plk-1 and plk-2." evidence="5">
    <original>T</original>
    <variation>E</variation>
    <location>
        <position position="190"/>
    </location>
</feature>
<accession>Q09436</accession>
<evidence type="ECO:0000250" key="1">
    <source>
        <dbReference type="UniProtKB" id="Q9XUB2"/>
    </source>
</evidence>
<evidence type="ECO:0000255" key="2">
    <source>
        <dbReference type="PROSITE-ProRule" id="PRU00723"/>
    </source>
</evidence>
<evidence type="ECO:0000256" key="3">
    <source>
        <dbReference type="SAM" id="MobiDB-lite"/>
    </source>
</evidence>
<evidence type="ECO:0000269" key="4">
    <source>
    </source>
</evidence>
<evidence type="ECO:0000269" key="5">
    <source>
    </source>
</evidence>
<evidence type="ECO:0000303" key="6">
    <source>
    </source>
</evidence>
<organism>
    <name type="scientific">Caenorhabditis elegans</name>
    <dbReference type="NCBI Taxonomy" id="6239"/>
    <lineage>
        <taxon>Eukaryota</taxon>
        <taxon>Metazoa</taxon>
        <taxon>Ecdysozoa</taxon>
        <taxon>Nematoda</taxon>
        <taxon>Chromadorea</taxon>
        <taxon>Rhabditida</taxon>
        <taxon>Rhabditina</taxon>
        <taxon>Rhabditomorpha</taxon>
        <taxon>Rhabditoidea</taxon>
        <taxon>Rhabditidae</taxon>
        <taxon>Peloderinae</taxon>
        <taxon>Caenorhabditis</taxon>
    </lineage>
</organism>
<reference key="1">
    <citation type="journal article" date="1998" name="Science">
        <title>Genome sequence of the nematode C. elegans: a platform for investigating biology.</title>
        <authorList>
            <consortium name="The C. elegans sequencing consortium"/>
        </authorList>
    </citation>
    <scope>NUCLEOTIDE SEQUENCE [LARGE SCALE GENOMIC DNA]</scope>
    <source>
        <strain>Bristol N2</strain>
    </source>
</reference>
<reference key="2">
    <citation type="journal article" date="2000" name="Mol. Cell">
        <title>MEX-5 and MEX-6 function to establish soma/germline asymmetry in early C. elegans embryos.</title>
        <authorList>
            <person name="Schubert C.M."/>
            <person name="Lin R."/>
            <person name="de Vries C.J."/>
            <person name="Plasterk R.H."/>
            <person name="Priess J.R."/>
        </authorList>
    </citation>
    <scope>FUNCTION</scope>
</reference>
<reference key="3">
    <citation type="journal article" date="2008" name="Development">
        <title>Polo kinases regulate C. elegans embryonic polarity via binding to DYRK2-primed MEX-5 and MEX-6.</title>
        <authorList>
            <person name="Nishi Y."/>
            <person name="Rogers E."/>
            <person name="Robertson S.M."/>
            <person name="Lin R."/>
        </authorList>
    </citation>
    <scope>FUNCTION</scope>
    <scope>INTERACTION WITH PLK-1 AND PLK-2</scope>
    <scope>PHOSPHORYLATION AT THR-190</scope>
    <scope>DISRUPTION PHENOTYPE</scope>
    <scope>MUTAGENESIS OF THR-190</scope>
</reference>
<protein>
    <recommendedName>
        <fullName>Zinc finger protein mex-6</fullName>
    </recommendedName>
</protein>
<comment type="function">
    <text evidence="4 5">Functions with mex-5 to affect embryonic viability, establish soma germline asymmetry in embryos and establish plk-1, pie-1, mex-1, and pos-1 asymmetry in embryos (PubMed:10882103, PubMed:18199581). Also affects formation of intestinal cells (PubMed:10882103).</text>
</comment>
<comment type="subunit">
    <text evidence="5">Interacts (probably when phosphorylated on Thr-190) with plk-1 (via POLO box domain) and plk-2 (via POLO box domain).</text>
</comment>
<comment type="subcellular location">
    <subcellularLocation>
        <location evidence="1">Cytoplasm</location>
    </subcellularLocation>
</comment>
<comment type="PTM">
    <text evidence="1">Phosphorylation on Ser-457 by par-1 promotes localization of the protein to the anterior cytoplasm of the zygote.</text>
</comment>
<comment type="disruption phenotype">
    <text evidence="5">RNAi-mediated knockdown in mex-5 zu199 mutant background causes a loss in plk-1 asymmetric distribution during the first embryonic cell divisions.</text>
</comment>
<sequence length="467" mass="52393">MTATSNSAPLAGGSLSSSATAQPPQPPPGHQQQHPLPQIYDSQMQYYYGSSMPNQPIPTYTAQNGAPQQFGTPPYYQDANGQFGQVPAQQQMMTAGHPYFYMAQPQQGGQHVAQSGQPQIFYYQQPLGQMAQQAAPMYFHPMQAASTPMLSEQMSMMPQIQSTNPQQSEQLRKSGAQISTTRTVPLTSSTPLPTSREYETVQRDRNRNSQSRYQCPIEHDDLPIDEISKITIDNHNDDTMSAEKENRFNKNRVEKLGRRGFAKPEVDSQLPHNFKTRLCMTHAAGINPCALGARCKFAHGLKELRASDIPTRYPNNKYKTKLCKNFARGGSGVCPYGLRCEFVHPSDTEFQNIPPYQRKMVEEHDSIPEDYVVARYQPRFMHTSGKATTPTKVTLKQRNVAGSMMCLSNTGRDLEAGGDFNHPEINENDLPPHLRRIRRGNPPVTRSRPSFSTKWTSVENLGLRGHY</sequence>
<proteinExistence type="evidence at protein level"/>
<keyword id="KW-0963">Cytoplasm</keyword>
<keyword id="KW-0217">Developmental protein</keyword>
<keyword id="KW-0238">DNA-binding</keyword>
<keyword id="KW-0479">Metal-binding</keyword>
<keyword id="KW-0597">Phosphoprotein</keyword>
<keyword id="KW-1185">Reference proteome</keyword>
<keyword id="KW-0677">Repeat</keyword>
<keyword id="KW-0862">Zinc</keyword>
<keyword id="KW-0863">Zinc-finger</keyword>
<dbReference type="EMBL" id="Z48009">
    <property type="protein sequence ID" value="CAA88088.2"/>
    <property type="molecule type" value="Genomic_DNA"/>
</dbReference>
<dbReference type="PIR" id="T18624">
    <property type="entry name" value="T18624"/>
</dbReference>
<dbReference type="RefSeq" id="NP_496043.1">
    <property type="nucleotide sequence ID" value="NM_063642.7"/>
</dbReference>
<dbReference type="BioGRID" id="39827">
    <property type="interactions" value="25"/>
</dbReference>
<dbReference type="DIP" id="DIP-26165N"/>
<dbReference type="FunCoup" id="Q09436">
    <property type="interactions" value="328"/>
</dbReference>
<dbReference type="IntAct" id="Q09436">
    <property type="interactions" value="15"/>
</dbReference>
<dbReference type="STRING" id="6239.AH6.5.1"/>
<dbReference type="iPTMnet" id="Q09436"/>
<dbReference type="PaxDb" id="6239-AH6.5"/>
<dbReference type="PeptideAtlas" id="Q09436"/>
<dbReference type="EnsemblMetazoa" id="AH6.5.1">
    <property type="protein sequence ID" value="AH6.5.1"/>
    <property type="gene ID" value="WBGene00003231"/>
</dbReference>
<dbReference type="GeneID" id="174504"/>
<dbReference type="KEGG" id="cel:CELE_AH6.5"/>
<dbReference type="UCSC" id="AH6.5">
    <property type="organism name" value="c. elegans"/>
</dbReference>
<dbReference type="AGR" id="WB:WBGene00003231"/>
<dbReference type="CTD" id="174504"/>
<dbReference type="WormBase" id="AH6.5">
    <property type="protein sequence ID" value="CE26846"/>
    <property type="gene ID" value="WBGene00003231"/>
    <property type="gene designation" value="mex-6"/>
</dbReference>
<dbReference type="eggNOG" id="KOG1677">
    <property type="taxonomic scope" value="Eukaryota"/>
</dbReference>
<dbReference type="GeneTree" id="ENSGT00970000196404"/>
<dbReference type="HOGENOM" id="CLU_584274_0_0_1"/>
<dbReference type="InParanoid" id="Q09436"/>
<dbReference type="OrthoDB" id="410307at2759"/>
<dbReference type="Reactome" id="R-CEL-450385">
    <property type="pathway name" value="Butyrate Response Factor 1 (BRF1) binds and destabilizes mRNA"/>
</dbReference>
<dbReference type="Reactome" id="R-CEL-450513">
    <property type="pathway name" value="Tristetraprolin (TTP, ZFP36) binds and destabilizes mRNA"/>
</dbReference>
<dbReference type="PRO" id="PR:Q09436"/>
<dbReference type="Proteomes" id="UP000001940">
    <property type="component" value="Chromosome II"/>
</dbReference>
<dbReference type="Bgee" id="WBGene00003231">
    <property type="expression patterns" value="Expressed in germ line (C elegans) and 3 other cell types or tissues"/>
</dbReference>
<dbReference type="GO" id="GO:0005737">
    <property type="term" value="C:cytoplasm"/>
    <property type="evidence" value="ECO:0000314"/>
    <property type="project" value="WormBase"/>
</dbReference>
<dbReference type="GO" id="GO:0005829">
    <property type="term" value="C:cytosol"/>
    <property type="evidence" value="ECO:0000318"/>
    <property type="project" value="GO_Central"/>
</dbReference>
<dbReference type="GO" id="GO:0043186">
    <property type="term" value="C:P granule"/>
    <property type="evidence" value="ECO:0000314"/>
    <property type="project" value="WormBase"/>
</dbReference>
<dbReference type="GO" id="GO:0003677">
    <property type="term" value="F:DNA binding"/>
    <property type="evidence" value="ECO:0007669"/>
    <property type="project" value="UniProtKB-KW"/>
</dbReference>
<dbReference type="GO" id="GO:0003730">
    <property type="term" value="F:mRNA 3'-UTR binding"/>
    <property type="evidence" value="ECO:0000314"/>
    <property type="project" value="WormBase"/>
</dbReference>
<dbReference type="GO" id="GO:0019904">
    <property type="term" value="F:protein domain specific binding"/>
    <property type="evidence" value="ECO:0000353"/>
    <property type="project" value="WormBase"/>
</dbReference>
<dbReference type="GO" id="GO:0019901">
    <property type="term" value="F:protein kinase binding"/>
    <property type="evidence" value="ECO:0000353"/>
    <property type="project" value="WormBase"/>
</dbReference>
<dbReference type="GO" id="GO:0008270">
    <property type="term" value="F:zinc ion binding"/>
    <property type="evidence" value="ECO:0007669"/>
    <property type="project" value="UniProtKB-KW"/>
</dbReference>
<dbReference type="GO" id="GO:0032880">
    <property type="term" value="P:regulation of protein localization"/>
    <property type="evidence" value="ECO:0000316"/>
    <property type="project" value="WormBase"/>
</dbReference>
<dbReference type="FunFam" id="4.10.1000.10:FF:000018">
    <property type="entry name" value="Zinc finger protein"/>
    <property type="match status" value="1"/>
</dbReference>
<dbReference type="Gene3D" id="4.10.1000.10">
    <property type="entry name" value="Zinc finger, CCCH-type"/>
    <property type="match status" value="2"/>
</dbReference>
<dbReference type="InterPro" id="IPR045877">
    <property type="entry name" value="ZFP36-like"/>
</dbReference>
<dbReference type="InterPro" id="IPR000571">
    <property type="entry name" value="Znf_CCCH"/>
</dbReference>
<dbReference type="InterPro" id="IPR036855">
    <property type="entry name" value="Znf_CCCH_sf"/>
</dbReference>
<dbReference type="PANTHER" id="PTHR12547">
    <property type="entry name" value="CCCH ZINC FINGER/TIS11-RELATED"/>
    <property type="match status" value="1"/>
</dbReference>
<dbReference type="PANTHER" id="PTHR12547:SF18">
    <property type="entry name" value="PROTEIN TIS11"/>
    <property type="match status" value="1"/>
</dbReference>
<dbReference type="Pfam" id="PF00642">
    <property type="entry name" value="zf-CCCH"/>
    <property type="match status" value="2"/>
</dbReference>
<dbReference type="SMART" id="SM00356">
    <property type="entry name" value="ZnF_C3H1"/>
    <property type="match status" value="2"/>
</dbReference>
<dbReference type="SUPFAM" id="SSF90229">
    <property type="entry name" value="CCCH zinc finger"/>
    <property type="match status" value="2"/>
</dbReference>
<dbReference type="PROSITE" id="PS50103">
    <property type="entry name" value="ZF_C3H1"/>
    <property type="match status" value="2"/>
</dbReference>
<name>MEX6_CAEEL</name>